<feature type="chain" id="PRO_0000074560" description="N-alpha-acetyltransferase 30">
    <location>
        <begin position="1"/>
        <end position="176"/>
    </location>
</feature>
<feature type="domain" description="N-acetyltransferase" evidence="2">
    <location>
        <begin position="3"/>
        <end position="159"/>
    </location>
</feature>
<feature type="strand" evidence="8">
    <location>
        <begin position="3"/>
        <end position="7"/>
    </location>
</feature>
<feature type="helix" evidence="8">
    <location>
        <begin position="13"/>
        <end position="26"/>
    </location>
</feature>
<feature type="helix" evidence="8">
    <location>
        <begin position="33"/>
        <end position="40"/>
    </location>
</feature>
<feature type="helix" evidence="8">
    <location>
        <begin position="44"/>
        <end position="46"/>
    </location>
</feature>
<feature type="strand" evidence="8">
    <location>
        <begin position="47"/>
        <end position="52"/>
    </location>
</feature>
<feature type="strand" evidence="8">
    <location>
        <begin position="55"/>
        <end position="72"/>
    </location>
</feature>
<feature type="turn" evidence="8">
    <location>
        <begin position="73"/>
        <end position="75"/>
    </location>
</feature>
<feature type="strand" evidence="8">
    <location>
        <begin position="76"/>
        <end position="86"/>
    </location>
</feature>
<feature type="helix" evidence="8">
    <location>
        <begin position="88"/>
        <end position="90"/>
    </location>
</feature>
<feature type="helix" evidence="8">
    <location>
        <begin position="95"/>
        <end position="109"/>
    </location>
</feature>
<feature type="strand" evidence="8">
    <location>
        <begin position="113"/>
        <end position="120"/>
    </location>
</feature>
<feature type="helix" evidence="8">
    <location>
        <begin position="124"/>
        <end position="131"/>
    </location>
</feature>
<feature type="turn" evidence="8">
    <location>
        <begin position="132"/>
        <end position="134"/>
    </location>
</feature>
<feature type="strand" evidence="8">
    <location>
        <begin position="136"/>
        <end position="141"/>
    </location>
</feature>
<feature type="turn" evidence="8">
    <location>
        <begin position="142"/>
        <end position="145"/>
    </location>
</feature>
<feature type="helix" evidence="8">
    <location>
        <begin position="146"/>
        <end position="148"/>
    </location>
</feature>
<feature type="strand" evidence="8">
    <location>
        <begin position="151"/>
        <end position="157"/>
    </location>
</feature>
<organism>
    <name type="scientific">Saccharomyces cerevisiae (strain ATCC 204508 / S288c)</name>
    <name type="common">Baker's yeast</name>
    <dbReference type="NCBI Taxonomy" id="559292"/>
    <lineage>
        <taxon>Eukaryota</taxon>
        <taxon>Fungi</taxon>
        <taxon>Dikarya</taxon>
        <taxon>Ascomycota</taxon>
        <taxon>Saccharomycotina</taxon>
        <taxon>Saccharomycetes</taxon>
        <taxon>Saccharomycetales</taxon>
        <taxon>Saccharomycetaceae</taxon>
        <taxon>Saccharomyces</taxon>
    </lineage>
</organism>
<accession>Q03503</accession>
<accession>D6W458</accession>
<evidence type="ECO:0000250" key="1">
    <source>
        <dbReference type="UniProtKB" id="Q147X3"/>
    </source>
</evidence>
<evidence type="ECO:0000255" key="2">
    <source>
        <dbReference type="PROSITE-ProRule" id="PRU00532"/>
    </source>
</evidence>
<evidence type="ECO:0000269" key="3">
    <source>
    </source>
</evidence>
<evidence type="ECO:0000269" key="4">
    <source>
    </source>
</evidence>
<evidence type="ECO:0000269" key="5">
    <source>
    </source>
</evidence>
<evidence type="ECO:0000269" key="6">
    <source>
    </source>
</evidence>
<evidence type="ECO:0000305" key="7"/>
<evidence type="ECO:0007829" key="8">
    <source>
        <dbReference type="PDB" id="6YGA"/>
    </source>
</evidence>
<dbReference type="EC" id="2.3.1.256" evidence="1"/>
<dbReference type="EMBL" id="M95912">
    <property type="protein sequence ID" value="AAA34753.1"/>
    <property type="molecule type" value="Genomic_RNA"/>
</dbReference>
<dbReference type="EMBL" id="Z49219">
    <property type="protein sequence ID" value="CAA89170.1"/>
    <property type="molecule type" value="Genomic_DNA"/>
</dbReference>
<dbReference type="EMBL" id="Z71255">
    <property type="protein sequence ID" value="CAA94997.1"/>
    <property type="molecule type" value="Genomic_DNA"/>
</dbReference>
<dbReference type="EMBL" id="BK006949">
    <property type="protein sequence ID" value="DAA11474.1"/>
    <property type="molecule type" value="Genomic_DNA"/>
</dbReference>
<dbReference type="PIR" id="B44031">
    <property type="entry name" value="B44031"/>
</dbReference>
<dbReference type="RefSeq" id="NP_015376.1">
    <property type="nucleotide sequence ID" value="NM_001184148.1"/>
</dbReference>
<dbReference type="PDB" id="6YGA">
    <property type="method" value="X-ray"/>
    <property type="resolution" value="2.40 A"/>
    <property type="chains" value="A=1-159"/>
</dbReference>
<dbReference type="PDB" id="6YGB">
    <property type="method" value="X-ray"/>
    <property type="resolution" value="2.45 A"/>
    <property type="chains" value="A=1-159"/>
</dbReference>
<dbReference type="PDB" id="6YGC">
    <property type="method" value="X-ray"/>
    <property type="resolution" value="2.99 A"/>
    <property type="chains" value="A=1-159"/>
</dbReference>
<dbReference type="PDB" id="6YGD">
    <property type="method" value="X-ray"/>
    <property type="resolution" value="2.75 A"/>
    <property type="chains" value="A=1-159"/>
</dbReference>
<dbReference type="PDBsum" id="6YGA"/>
<dbReference type="PDBsum" id="6YGB"/>
<dbReference type="PDBsum" id="6YGC"/>
<dbReference type="PDBsum" id="6YGD"/>
<dbReference type="SMR" id="Q03503"/>
<dbReference type="BioGRID" id="36226">
    <property type="interactions" value="274"/>
</dbReference>
<dbReference type="ComplexPortal" id="CPX-781">
    <property type="entry name" value="NatC N-alpha-acetyltransferase complex"/>
</dbReference>
<dbReference type="DIP" id="DIP-1427N"/>
<dbReference type="FunCoup" id="Q03503">
    <property type="interactions" value="597"/>
</dbReference>
<dbReference type="IntAct" id="Q03503">
    <property type="interactions" value="5"/>
</dbReference>
<dbReference type="MINT" id="Q03503"/>
<dbReference type="STRING" id="4932.YPR051W"/>
<dbReference type="iPTMnet" id="Q03503"/>
<dbReference type="PaxDb" id="4932-YPR051W"/>
<dbReference type="PeptideAtlas" id="Q03503"/>
<dbReference type="EnsemblFungi" id="YPR051W_mRNA">
    <property type="protein sequence ID" value="YPR051W"/>
    <property type="gene ID" value="YPR051W"/>
</dbReference>
<dbReference type="GeneID" id="856163"/>
<dbReference type="KEGG" id="sce:YPR051W"/>
<dbReference type="AGR" id="SGD:S000006255"/>
<dbReference type="SGD" id="S000006255">
    <property type="gene designation" value="MAK3"/>
</dbReference>
<dbReference type="VEuPathDB" id="FungiDB:YPR051W"/>
<dbReference type="eggNOG" id="KOG3139">
    <property type="taxonomic scope" value="Eukaryota"/>
</dbReference>
<dbReference type="GeneTree" id="ENSGT00390000005665"/>
<dbReference type="HOGENOM" id="CLU_013985_0_3_1"/>
<dbReference type="InParanoid" id="Q03503"/>
<dbReference type="OMA" id="LCIFARH"/>
<dbReference type="OrthoDB" id="249099at2759"/>
<dbReference type="BioCyc" id="YEAST:YPR051W-MONOMER"/>
<dbReference type="BRENDA" id="2.3.1.256">
    <property type="organism ID" value="984"/>
</dbReference>
<dbReference type="BioGRID-ORCS" id="856163">
    <property type="hits" value="0 hits in 10 CRISPR screens"/>
</dbReference>
<dbReference type="PRO" id="PR:Q03503"/>
<dbReference type="Proteomes" id="UP000002311">
    <property type="component" value="Chromosome XVI"/>
</dbReference>
<dbReference type="RNAct" id="Q03503">
    <property type="molecule type" value="protein"/>
</dbReference>
<dbReference type="GO" id="GO:0005829">
    <property type="term" value="C:cytosol"/>
    <property type="evidence" value="ECO:0000304"/>
    <property type="project" value="Reactome"/>
</dbReference>
<dbReference type="GO" id="GO:0031417">
    <property type="term" value="C:NatC complex"/>
    <property type="evidence" value="ECO:0000314"/>
    <property type="project" value="SGD"/>
</dbReference>
<dbReference type="GO" id="GO:0005634">
    <property type="term" value="C:nucleus"/>
    <property type="evidence" value="ECO:0007669"/>
    <property type="project" value="UniProtKB-SubCell"/>
</dbReference>
<dbReference type="GO" id="GO:0120518">
    <property type="term" value="F:protein N-terminal-methionine acetyltransferase activity"/>
    <property type="evidence" value="ECO:0007669"/>
    <property type="project" value="UniProtKB-EC"/>
</dbReference>
<dbReference type="GO" id="GO:0004596">
    <property type="term" value="F:protein-N-terminal amino-acid acetyltransferase activity"/>
    <property type="evidence" value="ECO:0000315"/>
    <property type="project" value="SGD"/>
</dbReference>
<dbReference type="GO" id="GO:0032880">
    <property type="term" value="P:regulation of protein localization"/>
    <property type="evidence" value="ECO:0000315"/>
    <property type="project" value="SGD"/>
</dbReference>
<dbReference type="CDD" id="cd04301">
    <property type="entry name" value="NAT_SF"/>
    <property type="match status" value="1"/>
</dbReference>
<dbReference type="FunFam" id="3.40.630.30:FF:000091">
    <property type="entry name" value="Peptide alpha-N-acetyltransferase"/>
    <property type="match status" value="1"/>
</dbReference>
<dbReference type="Gene3D" id="3.40.630.30">
    <property type="match status" value="1"/>
</dbReference>
<dbReference type="InterPro" id="IPR016181">
    <property type="entry name" value="Acyl_CoA_acyltransferase"/>
</dbReference>
<dbReference type="InterPro" id="IPR000182">
    <property type="entry name" value="GNAT_dom"/>
</dbReference>
<dbReference type="InterPro" id="IPR044542">
    <property type="entry name" value="NAA30-like"/>
</dbReference>
<dbReference type="PANTHER" id="PTHR45896">
    <property type="entry name" value="N-ALPHA-ACETYLTRANSFERASE 30"/>
    <property type="match status" value="1"/>
</dbReference>
<dbReference type="PANTHER" id="PTHR45896:SF1">
    <property type="entry name" value="N-ALPHA-ACETYLTRANSFERASE 30"/>
    <property type="match status" value="1"/>
</dbReference>
<dbReference type="Pfam" id="PF00583">
    <property type="entry name" value="Acetyltransf_1"/>
    <property type="match status" value="1"/>
</dbReference>
<dbReference type="SUPFAM" id="SSF55729">
    <property type="entry name" value="Acyl-CoA N-acyltransferases (Nat)"/>
    <property type="match status" value="1"/>
</dbReference>
<dbReference type="PROSITE" id="PS51186">
    <property type="entry name" value="GNAT"/>
    <property type="match status" value="1"/>
</dbReference>
<proteinExistence type="evidence at protein level"/>
<gene>
    <name type="primary">MAK3</name>
    <name type="synonym">NAA30</name>
    <name type="ordered locus">YPR051W</name>
    <name type="ORF">YP9499.08</name>
</gene>
<reference key="1">
    <citation type="journal article" date="1992" name="J. Biol. Chem.">
        <title>MAK3 encodes an N-acetyltransferase whose modification of the L-A gag NH2 terminus is necessary for virus particle assembly.</title>
        <authorList>
            <person name="Tercero J.C."/>
            <person name="Wickner R.B."/>
        </authorList>
    </citation>
    <scope>NUCLEOTIDE SEQUENCE [GENOMIC DNA]</scope>
</reference>
<reference key="2">
    <citation type="journal article" date="1997" name="Nature">
        <title>The nucleotide sequence of Saccharomyces cerevisiae chromosome XVI.</title>
        <authorList>
            <person name="Bussey H."/>
            <person name="Storms R.K."/>
            <person name="Ahmed A."/>
            <person name="Albermann K."/>
            <person name="Allen E."/>
            <person name="Ansorge W."/>
            <person name="Araujo R."/>
            <person name="Aparicio A."/>
            <person name="Barrell B.G."/>
            <person name="Badcock K."/>
            <person name="Benes V."/>
            <person name="Botstein D."/>
            <person name="Bowman S."/>
            <person name="Brueckner M."/>
            <person name="Carpenter J."/>
            <person name="Cherry J.M."/>
            <person name="Chung E."/>
            <person name="Churcher C.M."/>
            <person name="Coster F."/>
            <person name="Davis K."/>
            <person name="Davis R.W."/>
            <person name="Dietrich F.S."/>
            <person name="Delius H."/>
            <person name="DiPaolo T."/>
            <person name="Dubois E."/>
            <person name="Duesterhoeft A."/>
            <person name="Duncan M."/>
            <person name="Floeth M."/>
            <person name="Fortin N."/>
            <person name="Friesen J.D."/>
            <person name="Fritz C."/>
            <person name="Goffeau A."/>
            <person name="Hall J."/>
            <person name="Hebling U."/>
            <person name="Heumann K."/>
            <person name="Hilbert H."/>
            <person name="Hillier L.W."/>
            <person name="Hunicke-Smith S."/>
            <person name="Hyman R.W."/>
            <person name="Johnston M."/>
            <person name="Kalman S."/>
            <person name="Kleine K."/>
            <person name="Komp C."/>
            <person name="Kurdi O."/>
            <person name="Lashkari D."/>
            <person name="Lew H."/>
            <person name="Lin A."/>
            <person name="Lin D."/>
            <person name="Louis E.J."/>
            <person name="Marathe R."/>
            <person name="Messenguy F."/>
            <person name="Mewes H.-W."/>
            <person name="Mirtipati S."/>
            <person name="Moestl D."/>
            <person name="Mueller-Auer S."/>
            <person name="Namath A."/>
            <person name="Nentwich U."/>
            <person name="Oefner P."/>
            <person name="Pearson D."/>
            <person name="Petel F.X."/>
            <person name="Pohl T.M."/>
            <person name="Purnelle B."/>
            <person name="Rajandream M.A."/>
            <person name="Rechmann S."/>
            <person name="Rieger M."/>
            <person name="Riles L."/>
            <person name="Roberts D."/>
            <person name="Schaefer M."/>
            <person name="Scharfe M."/>
            <person name="Scherens B."/>
            <person name="Schramm S."/>
            <person name="Schroeder M."/>
            <person name="Sdicu A.-M."/>
            <person name="Tettelin H."/>
            <person name="Urrestarazu L.A."/>
            <person name="Ushinsky S."/>
            <person name="Vierendeels F."/>
            <person name="Vissers S."/>
            <person name="Voss H."/>
            <person name="Walsh S.V."/>
            <person name="Wambutt R."/>
            <person name="Wang Y."/>
            <person name="Wedler E."/>
            <person name="Wedler H."/>
            <person name="Winnett E."/>
            <person name="Zhong W.-W."/>
            <person name="Zollner A."/>
            <person name="Vo D.H."/>
            <person name="Hani J."/>
        </authorList>
    </citation>
    <scope>NUCLEOTIDE SEQUENCE [LARGE SCALE GENOMIC DNA]</scope>
    <source>
        <strain>ATCC 204508 / S288c</strain>
    </source>
</reference>
<reference key="3">
    <citation type="journal article" date="2014" name="G3 (Bethesda)">
        <title>The reference genome sequence of Saccharomyces cerevisiae: Then and now.</title>
        <authorList>
            <person name="Engel S.R."/>
            <person name="Dietrich F.S."/>
            <person name="Fisk D.G."/>
            <person name="Binkley G."/>
            <person name="Balakrishnan R."/>
            <person name="Costanzo M.C."/>
            <person name="Dwight S.S."/>
            <person name="Hitz B.C."/>
            <person name="Karra K."/>
            <person name="Nash R.S."/>
            <person name="Weng S."/>
            <person name="Wong E.D."/>
            <person name="Lloyd P."/>
            <person name="Skrzypek M.S."/>
            <person name="Miyasato S.R."/>
            <person name="Simison M."/>
            <person name="Cherry J.M."/>
        </authorList>
    </citation>
    <scope>GENOME REANNOTATION</scope>
    <source>
        <strain>ATCC 204508 / S288c</strain>
    </source>
</reference>
<reference key="4">
    <citation type="journal article" date="1992" name="J. Biol. Chem.">
        <title>Localized mutagenesis and evidence for post-transcriptional regulation of MAK3. A putative N-acetyltransferase required for double-stranded RNA virus propagation in Saccharomyces cerevisiae.</title>
        <authorList>
            <person name="Tercero J.C."/>
            <person name="Riles L.E."/>
            <person name="Wickner R.B."/>
        </authorList>
    </citation>
    <scope>MUTAGENESIS</scope>
</reference>
<reference key="5">
    <citation type="journal article" date="2001" name="J. Biol. Chem.">
        <title>NatC Nalpha-terminal acetyltransferase of yeast contains three subunits, Mak3p, Mak10p, and Mak31p.</title>
        <authorList>
            <person name="Polevoda B."/>
            <person name="Sherman F."/>
        </authorList>
    </citation>
    <scope>IDENTIFICATION IN THE NATC COMPLEX</scope>
    <scope>FUNCTION OF THE NATC COMPLEX</scope>
</reference>
<reference key="6">
    <citation type="journal article" date="2003" name="Nature">
        <title>Global analysis of protein localization in budding yeast.</title>
        <authorList>
            <person name="Huh W.-K."/>
            <person name="Falvo J.V."/>
            <person name="Gerke L.C."/>
            <person name="Carroll A.S."/>
            <person name="Howson R.W."/>
            <person name="Weissman J.S."/>
            <person name="O'Shea E.K."/>
        </authorList>
    </citation>
    <scope>SUBCELLULAR LOCATION [LARGE SCALE ANALYSIS]</scope>
</reference>
<reference key="7">
    <citation type="journal article" date="2003" name="Nature">
        <title>Global analysis of protein expression in yeast.</title>
        <authorList>
            <person name="Ghaemmaghami S."/>
            <person name="Huh W.-K."/>
            <person name="Bower K."/>
            <person name="Howson R.W."/>
            <person name="Belle A."/>
            <person name="Dephoure N."/>
            <person name="O'Shea E.K."/>
            <person name="Weissman J.S."/>
        </authorList>
    </citation>
    <scope>LEVEL OF PROTEIN EXPRESSION [LARGE SCALE ANALYSIS]</scope>
</reference>
<reference key="8">
    <citation type="journal article" date="2007" name="J. Cell Biol.">
        <title>The yeast orthologue of GRASP65 forms a complex with a coiled-coil protein that contributes to ER to Golgi traffic.</title>
        <authorList>
            <person name="Behnia R."/>
            <person name="Barr F.A."/>
            <person name="Flanagan J.J."/>
            <person name="Barlowe C."/>
            <person name="Munro S."/>
        </authorList>
    </citation>
    <scope>FUNCTION</scope>
</reference>
<reference key="9">
    <citation type="journal article" date="2012" name="Proc. Natl. Acad. Sci. U.S.A.">
        <title>N-terminal acetylome analyses and functional insights of the N-terminal acetyltransferase NatB.</title>
        <authorList>
            <person name="Van Damme P."/>
            <person name="Lasa M."/>
            <person name="Polevoda B."/>
            <person name="Gazquez C."/>
            <person name="Elosegui-Artola A."/>
            <person name="Kim D.S."/>
            <person name="De Juan-Pardo E."/>
            <person name="Demeyer K."/>
            <person name="Hole K."/>
            <person name="Larrea E."/>
            <person name="Timmerman E."/>
            <person name="Prieto J."/>
            <person name="Arnesen T."/>
            <person name="Sherman F."/>
            <person name="Gevaert K."/>
            <person name="Aldabe R."/>
        </authorList>
    </citation>
    <scope>IDENTIFICATION BY MASS SPECTROMETRY [LARGE SCALE ANALYSIS]</scope>
</reference>
<name>NAA30_YEAST</name>
<keyword id="KW-0002">3D-structure</keyword>
<keyword id="KW-0012">Acyltransferase</keyword>
<keyword id="KW-0963">Cytoplasm</keyword>
<keyword id="KW-0539">Nucleus</keyword>
<keyword id="KW-1185">Reference proteome</keyword>
<keyword id="KW-0808">Transferase</keyword>
<sequence length="176" mass="20457">MEIVYKPLDIRNEEQFASIKKLIDADLSEPYSIYVYRYFLNQWPELTYIAVDNKSGTPNIPIGCIVCKMDPHRNVRLRGYIGMLAVESTYRGHGIAKKLVEIAIDKMQREHCDEIMLETEVENSAALNLYEGMGFIRMKRMFRYYLNEGDAFKLILPLTEKSCTRSTFLMHGRLAT</sequence>
<comment type="function">
    <text evidence="3 6">Catalytic component of the NatC N-terminal acetyltransferase, which catalyzes acetylation of the N-terminus Met of L-A virus GAG protein and possibly GRH1.</text>
</comment>
<comment type="catalytic activity">
    <reaction evidence="1">
        <text>N-terminal L-methionyl-L-leucyl-[protein] + acetyl-CoA = N-terminal N(alpha)-acetyl-L-methionyl-L-leucyl-[protein] + CoA + H(+)</text>
        <dbReference type="Rhea" id="RHEA:50520"/>
        <dbReference type="Rhea" id="RHEA-COMP:12711"/>
        <dbReference type="Rhea" id="RHEA-COMP:12712"/>
        <dbReference type="ChEBI" id="CHEBI:15378"/>
        <dbReference type="ChEBI" id="CHEBI:57287"/>
        <dbReference type="ChEBI" id="CHEBI:57288"/>
        <dbReference type="ChEBI" id="CHEBI:133377"/>
        <dbReference type="ChEBI" id="CHEBI:133378"/>
        <dbReference type="EC" id="2.3.1.256"/>
    </reaction>
</comment>
<comment type="catalytic activity">
    <reaction evidence="1">
        <text>N-terminal L-methionyl-L-isoleucyl-[protein] + acetyl-CoA = N-terminal N(alpha)-acetyl-L-methionyl-L-isoleucyl-[protein] + CoA + H(+)</text>
        <dbReference type="Rhea" id="RHEA:50524"/>
        <dbReference type="Rhea" id="RHEA-COMP:12713"/>
        <dbReference type="Rhea" id="RHEA-COMP:12714"/>
        <dbReference type="ChEBI" id="CHEBI:15378"/>
        <dbReference type="ChEBI" id="CHEBI:57287"/>
        <dbReference type="ChEBI" id="CHEBI:57288"/>
        <dbReference type="ChEBI" id="CHEBI:133379"/>
        <dbReference type="ChEBI" id="CHEBI:133380"/>
        <dbReference type="EC" id="2.3.1.256"/>
    </reaction>
</comment>
<comment type="catalytic activity">
    <reaction evidence="1">
        <text>N-terminal L-methionyl-L-phenylalanyl-[protein] + acetyl-CoA = N-terminal N(alpha)-acetyl-L-methionyl-L-phenylalanyl-[protein] + CoA + H(+)</text>
        <dbReference type="Rhea" id="RHEA:50528"/>
        <dbReference type="Rhea" id="RHEA-COMP:12715"/>
        <dbReference type="Rhea" id="RHEA-COMP:12716"/>
        <dbReference type="ChEBI" id="CHEBI:15378"/>
        <dbReference type="ChEBI" id="CHEBI:57287"/>
        <dbReference type="ChEBI" id="CHEBI:57288"/>
        <dbReference type="ChEBI" id="CHEBI:133382"/>
        <dbReference type="ChEBI" id="CHEBI:133383"/>
        <dbReference type="EC" id="2.3.1.256"/>
    </reaction>
</comment>
<comment type="catalytic activity">
    <reaction evidence="1">
        <text>N-terminal L-methionyl-L-tryptophyl-[protein] + acetyl-CoA = N-terminal N(alpha)-acetyl-L-methionyl-L-tryptophyl-[protein] + CoA + H(+)</text>
        <dbReference type="Rhea" id="RHEA:50560"/>
        <dbReference type="Rhea" id="RHEA-COMP:12724"/>
        <dbReference type="Rhea" id="RHEA-COMP:12725"/>
        <dbReference type="ChEBI" id="CHEBI:15378"/>
        <dbReference type="ChEBI" id="CHEBI:57287"/>
        <dbReference type="ChEBI" id="CHEBI:57288"/>
        <dbReference type="ChEBI" id="CHEBI:133386"/>
        <dbReference type="ChEBI" id="CHEBI:133387"/>
        <dbReference type="EC" id="2.3.1.256"/>
    </reaction>
</comment>
<comment type="catalytic activity">
    <reaction evidence="1">
        <text>N-terminal L-methionyl-L-tyrosyl-[protein] + acetyl-CoA = N-terminal N(alpha)-acetyl-L-methionyl-L-tyrosyl-[protein] + CoA + H(+)</text>
        <dbReference type="Rhea" id="RHEA:50532"/>
        <dbReference type="Rhea" id="RHEA-COMP:12717"/>
        <dbReference type="Rhea" id="RHEA-COMP:12718"/>
        <dbReference type="ChEBI" id="CHEBI:15378"/>
        <dbReference type="ChEBI" id="CHEBI:57287"/>
        <dbReference type="ChEBI" id="CHEBI:57288"/>
        <dbReference type="ChEBI" id="CHEBI:133384"/>
        <dbReference type="ChEBI" id="CHEBI:133385"/>
        <dbReference type="EC" id="2.3.1.256"/>
    </reaction>
</comment>
<comment type="subunit">
    <text evidence="3">Component of the N-terminal acetyltransferase C (NatC) complex, which is composed of MAK3, MAK10 and MAK31.</text>
</comment>
<comment type="interaction">
    <interactant intactId="EBI-10388">
        <id>Q03503</id>
    </interactant>
    <interactant intactId="EBI-10924">
        <id>Q02197</id>
        <label>MAK10</label>
    </interactant>
    <organismsDiffer>false</organismsDiffer>
    <experiments>4</experiments>
</comment>
<comment type="interaction">
    <interactant intactId="EBI-10388">
        <id>Q03503</id>
    </interactant>
    <interactant intactId="EBI-10950">
        <id>P23059</id>
        <label>MAK31</label>
    </interactant>
    <organismsDiffer>false</organismsDiffer>
    <experiments>2</experiments>
</comment>
<comment type="subcellular location">
    <subcellularLocation>
        <location evidence="4">Cytoplasm</location>
    </subcellularLocation>
    <subcellularLocation>
        <location evidence="4">Nucleus</location>
    </subcellularLocation>
</comment>
<comment type="miscellaneous">
    <text evidence="5">Present with 1940 molecules/cell in log phase SD medium.</text>
</comment>
<comment type="similarity">
    <text evidence="7">Belongs to the acetyltransferase family. MAK3 subfamily.</text>
</comment>
<protein>
    <recommendedName>
        <fullName>N-alpha-acetyltransferase 30</fullName>
        <ecNumber evidence="1">2.3.1.256</ecNumber>
    </recommendedName>
    <alternativeName>
        <fullName>L-A virus GAG protein N-acetyltransferase subunit MAK3</fullName>
    </alternativeName>
    <alternativeName>
        <fullName>Maintenance of killer protein 3</fullName>
    </alternativeName>
    <alternativeName>
        <fullName>N-terminal acetyltransferase C complex catalytic subunit MAK3</fullName>
        <shortName>NatC complex subunit MAK3</shortName>
    </alternativeName>
    <alternativeName>
        <fullName>NatC catalytic subunit</fullName>
    </alternativeName>
</protein>